<dbReference type="EMBL" id="AJ965256">
    <property type="protein sequence ID" value="CAI82606.1"/>
    <property type="molecule type" value="Genomic_DNA"/>
</dbReference>
<dbReference type="RefSeq" id="WP_011308963.1">
    <property type="nucleotide sequence ID" value="NC_007356.1"/>
</dbReference>
<dbReference type="SMR" id="Q3ZZK7"/>
<dbReference type="KEGG" id="deh:cbdbA397"/>
<dbReference type="HOGENOM" id="CLU_009621_2_1_0"/>
<dbReference type="Proteomes" id="UP000000433">
    <property type="component" value="Chromosome"/>
</dbReference>
<dbReference type="GO" id="GO:0005737">
    <property type="term" value="C:cytoplasm"/>
    <property type="evidence" value="ECO:0007669"/>
    <property type="project" value="UniProtKB-SubCell"/>
</dbReference>
<dbReference type="GO" id="GO:0009380">
    <property type="term" value="C:excinuclease repair complex"/>
    <property type="evidence" value="ECO:0007669"/>
    <property type="project" value="InterPro"/>
</dbReference>
<dbReference type="GO" id="GO:0005524">
    <property type="term" value="F:ATP binding"/>
    <property type="evidence" value="ECO:0007669"/>
    <property type="project" value="UniProtKB-UniRule"/>
</dbReference>
<dbReference type="GO" id="GO:0016887">
    <property type="term" value="F:ATP hydrolysis activity"/>
    <property type="evidence" value="ECO:0007669"/>
    <property type="project" value="InterPro"/>
</dbReference>
<dbReference type="GO" id="GO:0003677">
    <property type="term" value="F:DNA binding"/>
    <property type="evidence" value="ECO:0007669"/>
    <property type="project" value="UniProtKB-UniRule"/>
</dbReference>
<dbReference type="GO" id="GO:0009381">
    <property type="term" value="F:excinuclease ABC activity"/>
    <property type="evidence" value="ECO:0007669"/>
    <property type="project" value="UniProtKB-UniRule"/>
</dbReference>
<dbReference type="GO" id="GO:0006289">
    <property type="term" value="P:nucleotide-excision repair"/>
    <property type="evidence" value="ECO:0007669"/>
    <property type="project" value="UniProtKB-UniRule"/>
</dbReference>
<dbReference type="GO" id="GO:0009432">
    <property type="term" value="P:SOS response"/>
    <property type="evidence" value="ECO:0007669"/>
    <property type="project" value="UniProtKB-UniRule"/>
</dbReference>
<dbReference type="CDD" id="cd17916">
    <property type="entry name" value="DEXHc_UvrB"/>
    <property type="match status" value="1"/>
</dbReference>
<dbReference type="CDD" id="cd18790">
    <property type="entry name" value="SF2_C_UvrB"/>
    <property type="match status" value="1"/>
</dbReference>
<dbReference type="Gene3D" id="6.10.140.240">
    <property type="match status" value="1"/>
</dbReference>
<dbReference type="Gene3D" id="3.40.50.300">
    <property type="entry name" value="P-loop containing nucleotide triphosphate hydrolases"/>
    <property type="match status" value="3"/>
</dbReference>
<dbReference type="Gene3D" id="4.10.860.10">
    <property type="entry name" value="UVR domain"/>
    <property type="match status" value="1"/>
</dbReference>
<dbReference type="HAMAP" id="MF_00204">
    <property type="entry name" value="UvrB"/>
    <property type="match status" value="1"/>
</dbReference>
<dbReference type="InterPro" id="IPR006935">
    <property type="entry name" value="Helicase/UvrB_N"/>
</dbReference>
<dbReference type="InterPro" id="IPR014001">
    <property type="entry name" value="Helicase_ATP-bd"/>
</dbReference>
<dbReference type="InterPro" id="IPR001650">
    <property type="entry name" value="Helicase_C-like"/>
</dbReference>
<dbReference type="InterPro" id="IPR027417">
    <property type="entry name" value="P-loop_NTPase"/>
</dbReference>
<dbReference type="InterPro" id="IPR001943">
    <property type="entry name" value="UVR_dom"/>
</dbReference>
<dbReference type="InterPro" id="IPR036876">
    <property type="entry name" value="UVR_dom_sf"/>
</dbReference>
<dbReference type="InterPro" id="IPR004807">
    <property type="entry name" value="UvrB"/>
</dbReference>
<dbReference type="InterPro" id="IPR041471">
    <property type="entry name" value="UvrB_inter"/>
</dbReference>
<dbReference type="InterPro" id="IPR024759">
    <property type="entry name" value="UvrB_YAD/RRR_dom"/>
</dbReference>
<dbReference type="NCBIfam" id="NF003673">
    <property type="entry name" value="PRK05298.1"/>
    <property type="match status" value="1"/>
</dbReference>
<dbReference type="NCBIfam" id="TIGR00631">
    <property type="entry name" value="uvrb"/>
    <property type="match status" value="1"/>
</dbReference>
<dbReference type="PANTHER" id="PTHR24029">
    <property type="entry name" value="UVRABC SYSTEM PROTEIN B"/>
    <property type="match status" value="1"/>
</dbReference>
<dbReference type="PANTHER" id="PTHR24029:SF0">
    <property type="entry name" value="UVRABC SYSTEM PROTEIN B"/>
    <property type="match status" value="1"/>
</dbReference>
<dbReference type="Pfam" id="PF00271">
    <property type="entry name" value="Helicase_C"/>
    <property type="match status" value="1"/>
</dbReference>
<dbReference type="Pfam" id="PF04851">
    <property type="entry name" value="ResIII"/>
    <property type="match status" value="1"/>
</dbReference>
<dbReference type="Pfam" id="PF02151">
    <property type="entry name" value="UVR"/>
    <property type="match status" value="1"/>
</dbReference>
<dbReference type="Pfam" id="PF12344">
    <property type="entry name" value="UvrB"/>
    <property type="match status" value="1"/>
</dbReference>
<dbReference type="Pfam" id="PF17757">
    <property type="entry name" value="UvrB_inter"/>
    <property type="match status" value="1"/>
</dbReference>
<dbReference type="SMART" id="SM00487">
    <property type="entry name" value="DEXDc"/>
    <property type="match status" value="1"/>
</dbReference>
<dbReference type="SMART" id="SM00490">
    <property type="entry name" value="HELICc"/>
    <property type="match status" value="1"/>
</dbReference>
<dbReference type="SUPFAM" id="SSF46600">
    <property type="entry name" value="C-terminal UvrC-binding domain of UvrB"/>
    <property type="match status" value="1"/>
</dbReference>
<dbReference type="SUPFAM" id="SSF52540">
    <property type="entry name" value="P-loop containing nucleoside triphosphate hydrolases"/>
    <property type="match status" value="2"/>
</dbReference>
<dbReference type="PROSITE" id="PS51192">
    <property type="entry name" value="HELICASE_ATP_BIND_1"/>
    <property type="match status" value="1"/>
</dbReference>
<dbReference type="PROSITE" id="PS51194">
    <property type="entry name" value="HELICASE_CTER"/>
    <property type="match status" value="1"/>
</dbReference>
<dbReference type="PROSITE" id="PS50151">
    <property type="entry name" value="UVR"/>
    <property type="match status" value="1"/>
</dbReference>
<proteinExistence type="inferred from homology"/>
<gene>
    <name evidence="1" type="primary">uvrB</name>
    <name type="ordered locus">cbdbA397</name>
</gene>
<feature type="chain" id="PRO_0000227309" description="UvrABC system protein B">
    <location>
        <begin position="1"/>
        <end position="664"/>
    </location>
</feature>
<feature type="domain" description="Helicase ATP-binding" evidence="1">
    <location>
        <begin position="25"/>
        <end position="412"/>
    </location>
</feature>
<feature type="domain" description="Helicase C-terminal" evidence="1">
    <location>
        <begin position="428"/>
        <end position="594"/>
    </location>
</feature>
<feature type="domain" description="UVR" evidence="1">
    <location>
        <begin position="620"/>
        <end position="655"/>
    </location>
</feature>
<feature type="short sequence motif" description="Beta-hairpin">
    <location>
        <begin position="91"/>
        <end position="114"/>
    </location>
</feature>
<feature type="binding site" evidence="1">
    <location>
        <begin position="38"/>
        <end position="45"/>
    </location>
    <ligand>
        <name>ATP</name>
        <dbReference type="ChEBI" id="CHEBI:30616"/>
    </ligand>
</feature>
<evidence type="ECO:0000255" key="1">
    <source>
        <dbReference type="HAMAP-Rule" id="MF_00204"/>
    </source>
</evidence>
<accession>Q3ZZK7</accession>
<sequence>MPSFKIVSDFALTGDQPQAVEKLAKGLVSGLTDQTLLGVTGSGKTFTMANVIARVNRPTLIISHNKTLAAQLYSEMKEFLPENSVEYFVSYYDYYQPEAYVPQKDMYIEKDSDINEEIDKLRHAATRALFERRDVVIVASVSCIYGLGEPEEYRSFVLPLKKGQSFRRDLILRRLVDMQYERNDLDFSRGKFRLRGDTLEIQPAYEELALRVEFFGDEIERIVSLDPVSGELLAGIEEINIYPAKHFVTSAEKMAEAIKSIQAELEDRLKELEAEGKMLEAARLKQRTNYDLEMMEQAGYCSGVENYSRHLAGRKAGSAPWTLLDYFPEDFLLIVDESHMSLPQIRGMYAGDSARKKTLVDYGFRLPSAMDNRPLSFDEFKARVKQAIYVSATPGPYEKEHSLQVVEQLVRPTGLLEPVMTVKPTVGQIDDLLEEVKKRVAKNERVLITTLTKKMSEKLADYLVEMGVKTHYLHSEVDTLERIEILRDLRLGVYDVIVGINLLREGLDLPEVSLVAILDADKEGYLRSEQALIQTMGRAARHVDGQVIMYADKITGSMQRAMDEIIRRRKIQEDYNRLHNITPQGIRKAIKDINERIRSVTAEVSGPEFRPTPTLREDIARLIKELESQMKKAAKNLEFERAALIRDRVVELRAALEIDPLGRK</sequence>
<keyword id="KW-0067">ATP-binding</keyword>
<keyword id="KW-0963">Cytoplasm</keyword>
<keyword id="KW-0227">DNA damage</keyword>
<keyword id="KW-0228">DNA excision</keyword>
<keyword id="KW-0234">DNA repair</keyword>
<keyword id="KW-0267">Excision nuclease</keyword>
<keyword id="KW-0547">Nucleotide-binding</keyword>
<keyword id="KW-0742">SOS response</keyword>
<protein>
    <recommendedName>
        <fullName evidence="1">UvrABC system protein B</fullName>
        <shortName evidence="1">Protein UvrB</shortName>
    </recommendedName>
    <alternativeName>
        <fullName evidence="1">Excinuclease ABC subunit B</fullName>
    </alternativeName>
</protein>
<reference key="1">
    <citation type="journal article" date="2005" name="Nat. Biotechnol.">
        <title>Genome sequence of the chlorinated compound-respiring bacterium Dehalococcoides species strain CBDB1.</title>
        <authorList>
            <person name="Kube M."/>
            <person name="Beck A."/>
            <person name="Zinder S.H."/>
            <person name="Kuhl H."/>
            <person name="Reinhardt R."/>
            <person name="Adrian L."/>
        </authorList>
    </citation>
    <scope>NUCLEOTIDE SEQUENCE [LARGE SCALE GENOMIC DNA]</scope>
    <source>
        <strain>CBDB1</strain>
    </source>
</reference>
<organism>
    <name type="scientific">Dehalococcoides mccartyi (strain CBDB1)</name>
    <dbReference type="NCBI Taxonomy" id="255470"/>
    <lineage>
        <taxon>Bacteria</taxon>
        <taxon>Bacillati</taxon>
        <taxon>Chloroflexota</taxon>
        <taxon>Dehalococcoidia</taxon>
        <taxon>Dehalococcoidales</taxon>
        <taxon>Dehalococcoidaceae</taxon>
        <taxon>Dehalococcoides</taxon>
    </lineage>
</organism>
<comment type="function">
    <text evidence="1">The UvrABC repair system catalyzes the recognition and processing of DNA lesions. A damage recognition complex composed of 2 UvrA and 2 UvrB subunits scans DNA for abnormalities. Upon binding of the UvrA(2)B(2) complex to a putative damaged site, the DNA wraps around one UvrB monomer. DNA wrap is dependent on ATP binding by UvrB and probably causes local melting of the DNA helix, facilitating insertion of UvrB beta-hairpin between the DNA strands. Then UvrB probes one DNA strand for the presence of a lesion. If a lesion is found the UvrA subunits dissociate and the UvrB-DNA preincision complex is formed. This complex is subsequently bound by UvrC and the second UvrB is released. If no lesion is found, the DNA wraps around the other UvrB subunit that will check the other stand for damage.</text>
</comment>
<comment type="subunit">
    <text evidence="1">Forms a heterotetramer with UvrA during the search for lesions. Interacts with UvrC in an incision complex.</text>
</comment>
<comment type="subcellular location">
    <subcellularLocation>
        <location evidence="1">Cytoplasm</location>
    </subcellularLocation>
</comment>
<comment type="domain">
    <text evidence="1">The beta-hairpin motif is involved in DNA binding.</text>
</comment>
<comment type="similarity">
    <text evidence="1">Belongs to the UvrB family.</text>
</comment>
<name>UVRB_DEHMC</name>